<dbReference type="EMBL" id="L10215">
    <property type="protein sequence ID" value="AAA03695.1"/>
    <property type="molecule type" value="Unassigned_DNA"/>
</dbReference>
<dbReference type="EMBL" id="M38317">
    <property type="protein sequence ID" value="AAA33037.1"/>
    <property type="molecule type" value="mRNA"/>
</dbReference>
<dbReference type="PIR" id="S35245">
    <property type="entry name" value="S35245"/>
</dbReference>
<dbReference type="SMR" id="Q08183"/>
<dbReference type="GO" id="GO:0009507">
    <property type="term" value="C:chloroplast"/>
    <property type="evidence" value="ECO:0007669"/>
    <property type="project" value="UniProtKB-SubCell"/>
</dbReference>
<dbReference type="GO" id="GO:0016984">
    <property type="term" value="F:ribulose-bisphosphate carboxylase activity"/>
    <property type="evidence" value="ECO:0007669"/>
    <property type="project" value="UniProtKB-UniRule"/>
</dbReference>
<dbReference type="GO" id="GO:0009853">
    <property type="term" value="P:photorespiration"/>
    <property type="evidence" value="ECO:0007669"/>
    <property type="project" value="UniProtKB-KW"/>
</dbReference>
<dbReference type="GO" id="GO:0019253">
    <property type="term" value="P:reductive pentose-phosphate cycle"/>
    <property type="evidence" value="ECO:0007669"/>
    <property type="project" value="UniProtKB-UniRule"/>
</dbReference>
<dbReference type="CDD" id="cd03527">
    <property type="entry name" value="RuBisCO_small"/>
    <property type="match status" value="1"/>
</dbReference>
<dbReference type="FunFam" id="3.30.190.10:FF:000001">
    <property type="entry name" value="Ribulose bisphosphate carboxylase small chain, chloroplastic"/>
    <property type="match status" value="1"/>
</dbReference>
<dbReference type="Gene3D" id="3.30.190.10">
    <property type="entry name" value="Ribulose bisphosphate carboxylase, small subunit"/>
    <property type="match status" value="1"/>
</dbReference>
<dbReference type="HAMAP" id="MF_00859">
    <property type="entry name" value="RuBisCO_S_bact"/>
    <property type="match status" value="1"/>
</dbReference>
<dbReference type="InterPro" id="IPR024681">
    <property type="entry name" value="RuBisCO_ssu"/>
</dbReference>
<dbReference type="InterPro" id="IPR000894">
    <property type="entry name" value="RuBisCO_ssu_dom"/>
</dbReference>
<dbReference type="InterPro" id="IPR024680">
    <property type="entry name" value="RuBisCO_ssu_N"/>
</dbReference>
<dbReference type="InterPro" id="IPR036385">
    <property type="entry name" value="RuBisCO_ssu_sf"/>
</dbReference>
<dbReference type="PANTHER" id="PTHR31262">
    <property type="entry name" value="RIBULOSE BISPHOSPHATE CARBOXYLASE SMALL CHAIN 1, CHLOROPLASTIC"/>
    <property type="match status" value="1"/>
</dbReference>
<dbReference type="PANTHER" id="PTHR31262:SF10">
    <property type="entry name" value="RIBULOSE BISPHOSPHATE CARBOXYLASE SMALL SUBUNIT 1A, CHLOROPLASTIC-RELATED"/>
    <property type="match status" value="1"/>
</dbReference>
<dbReference type="Pfam" id="PF12338">
    <property type="entry name" value="RbcS"/>
    <property type="match status" value="1"/>
</dbReference>
<dbReference type="Pfam" id="PF00101">
    <property type="entry name" value="RuBisCO_small"/>
    <property type="match status" value="1"/>
</dbReference>
<dbReference type="PRINTS" id="PR00152">
    <property type="entry name" value="RUBISCOSMALL"/>
</dbReference>
<dbReference type="SMART" id="SM00961">
    <property type="entry name" value="RuBisCO_small"/>
    <property type="match status" value="1"/>
</dbReference>
<dbReference type="SUPFAM" id="SSF55239">
    <property type="entry name" value="RuBisCO, small subunit"/>
    <property type="match status" value="1"/>
</dbReference>
<organism>
    <name type="scientific">Mesembryanthemum crystallinum</name>
    <name type="common">Common ice plant</name>
    <name type="synonym">Cryophytum crystallinum</name>
    <dbReference type="NCBI Taxonomy" id="3544"/>
    <lineage>
        <taxon>Eukaryota</taxon>
        <taxon>Viridiplantae</taxon>
        <taxon>Streptophyta</taxon>
        <taxon>Embryophyta</taxon>
        <taxon>Tracheophyta</taxon>
        <taxon>Spermatophyta</taxon>
        <taxon>Magnoliopsida</taxon>
        <taxon>eudicotyledons</taxon>
        <taxon>Gunneridae</taxon>
        <taxon>Pentapetalae</taxon>
        <taxon>Caryophyllales</taxon>
        <taxon>Aizoaceae</taxon>
        <taxon>Mesembryanthemum</taxon>
        <taxon>Mesembryanthemum subgen. Cryophytum</taxon>
    </lineage>
</organism>
<gene>
    <name evidence="1" type="primary">RBCS3</name>
    <name evidence="3" type="synonym">RBCS-3</name>
</gene>
<evidence type="ECO:0000255" key="1">
    <source>
        <dbReference type="HAMAP-Rule" id="MF_00860"/>
    </source>
</evidence>
<evidence type="ECO:0000269" key="2">
    <source>
    </source>
</evidence>
<evidence type="ECO:0000303" key="3">
    <source>
    </source>
</evidence>
<evidence type="ECO:0000305" key="4"/>
<comment type="function">
    <text evidence="1">RuBisCO catalyzes two reactions: the carboxylation of D-ribulose 1,5-bisphosphate, the primary event in carbon dioxide fixation, as well as the oxidative fragmentation of the pentose substrate. Both reactions occur simultaneously and in competition at the same active site. Although the small subunit is not catalytic it is essential for maximal activity.</text>
</comment>
<comment type="subunit">
    <text evidence="1">Heterohexadecamer of 8 large and 8 small subunits.</text>
</comment>
<comment type="subcellular location">
    <subcellularLocation>
        <location evidence="1">Plastid</location>
        <location evidence="1">Chloroplast</location>
    </subcellularLocation>
</comment>
<comment type="induction">
    <text evidence="2">Expressed at intermediate levels.</text>
</comment>
<comment type="miscellaneous">
    <text evidence="1">The basic functional RuBisCO is composed of a large chain homodimer in a 'head-to-tail' conformation. In form I RuBisCO this homodimer is arranged in a barrel-like tetramer with the small subunits forming a tetrameric 'cap' on each end of the 'barrel'.</text>
</comment>
<comment type="similarity">
    <text evidence="1">Belongs to the RuBisCO small chain family.</text>
</comment>
<accession>Q08183</accession>
<proteinExistence type="evidence at transcript level"/>
<sequence>MASSLMSNAATTMAAATTTAQANMVAPFNGLKSVSAFPVTRKNNDITSVASNGGRVQCMQVWPPLGKKKFETLSYLPPLSEESLMKEVQYLLNNGWVPCLEFEPTHGFVYREHGNTPGYYDGRYWTMWKLPMFGCTDPSQVVAELEEAKKAYPEAFIRIIGFDNVRQVQCISFIAYKPASYDA</sequence>
<protein>
    <recommendedName>
        <fullName evidence="1">Ribulose bisphosphate carboxylase small subunit, chloroplastic 3</fullName>
        <shortName evidence="1">RuBisCO small subunit 3</shortName>
    </recommendedName>
</protein>
<name>RBS3_MESCR</name>
<reference key="1">
    <citation type="journal article" date="1993" name="Mol. Gen. Genet.">
        <title>The six genes of the Rubisco small subunit multigene family from Mesembryanthemum crystallinum, a facultative CAM plant.</title>
        <authorList>
            <person name="Derocher E.J."/>
            <person name="Quigley F."/>
            <person name="Mache R."/>
            <person name="Bohnert H.J."/>
        </authorList>
    </citation>
    <scope>NUCLEOTIDE SEQUENCE</scope>
    <scope>INDUCTION</scope>
</reference>
<reference key="2">
    <citation type="journal article" date="1991" name="Plant Physiol.">
        <title>cDNA sequences for transcripts of the ribulose-1,5-bisphosphate carboxylase/oxygenase small subunit gene family of Mesembryanthemum crystallinum.</title>
        <authorList>
            <person name="Derocher E.J."/>
            <person name="Michalowski C.B."/>
            <person name="Bohnert H.J."/>
        </authorList>
    </citation>
    <scope>NUCLEOTIDE SEQUENCE</scope>
</reference>
<keyword id="KW-0113">Calvin cycle</keyword>
<keyword id="KW-0120">Carbon dioxide fixation</keyword>
<keyword id="KW-0150">Chloroplast</keyword>
<keyword id="KW-0601">Photorespiration</keyword>
<keyword id="KW-0602">Photosynthesis</keyword>
<keyword id="KW-0934">Plastid</keyword>
<keyword id="KW-0809">Transit peptide</keyword>
<feature type="transit peptide" description="Chloroplast" evidence="1">
    <location>
        <begin position="1"/>
        <end position="57"/>
    </location>
</feature>
<feature type="chain" id="PRO_0000031529" description="Ribulose bisphosphate carboxylase small subunit, chloroplastic 3" evidence="1">
    <location>
        <begin position="58"/>
        <end position="183"/>
    </location>
</feature>
<feature type="sequence conflict" description="In Ref. 2; AAA33037." evidence="4" ref="2">
    <original>M</original>
    <variation>I</variation>
    <location>
        <position position="85"/>
    </location>
</feature>